<comment type="function">
    <text evidence="1 2">Shows cytolytic activity on many different cells by forming pore in lipid membranes. In vivo, increases heart rate or kills the animal by cardiac arrest. In addition, it binds to heparin with high affinity, interacts with Kv channel-interacting protein 1 (KCNIP1) in a calcium-independent manner, and binds to integrin alpha-V/beta-3 (ITGAV/ITGB3) with moderate affinity.</text>
</comment>
<comment type="subunit">
    <text evidence="1">Monomer in solution; Homodimer and oligomer in the presence of negatively charged lipids forming a pore with a size ranging between 20 and 30 Angstroms.</text>
</comment>
<comment type="subcellular location">
    <subcellularLocation>
        <location evidence="3">Secreted</location>
    </subcellularLocation>
    <subcellularLocation>
        <location evidence="1">Target cell membrane</location>
    </subcellularLocation>
</comment>
<comment type="tissue specificity">
    <text evidence="4">Expressed by the venom gland.</text>
</comment>
<comment type="toxic dose">
    <text evidence="3">LD(50) is 2.61 mg/kg by subcutaneous injection.</text>
</comment>
<comment type="miscellaneous">
    <text evidence="4">Is classified as a P-type cytotoxin, since a proline residue stands at position 30 (Pro-31 in standard classification).</text>
</comment>
<comment type="similarity">
    <text evidence="4">Belongs to the three-finger toxin family. Short-chain subfamily. Type IA cytotoxin sub-subfamily.</text>
</comment>
<name>3SA7_NAJHA</name>
<feature type="chain" id="PRO_0000093491" description="Cytotoxin 7" evidence="3">
    <location>
        <begin position="1"/>
        <end position="60"/>
    </location>
</feature>
<feature type="disulfide bond" evidence="1">
    <location>
        <begin position="3"/>
        <end position="21"/>
    </location>
</feature>
<feature type="disulfide bond" evidence="1">
    <location>
        <begin position="14"/>
        <end position="38"/>
    </location>
</feature>
<feature type="disulfide bond" evidence="1">
    <location>
        <begin position="42"/>
        <end position="53"/>
    </location>
</feature>
<feature type="disulfide bond" evidence="1">
    <location>
        <begin position="54"/>
        <end position="59"/>
    </location>
</feature>
<feature type="sequence variant" description="In minor component.">
    <original>M</original>
    <variation>V</variation>
    <location>
        <position position="52"/>
    </location>
</feature>
<feature type="sequence variant" description="In minor component.">
    <original>N</original>
    <variation>S</variation>
    <location>
        <position position="55"/>
    </location>
</feature>
<dbReference type="PIR" id="D01727">
    <property type="entry name" value="H3NJ7E"/>
</dbReference>
<dbReference type="PIR" id="E01727">
    <property type="entry name" value="H3NJ7M"/>
</dbReference>
<dbReference type="SMR" id="P01466"/>
<dbReference type="GO" id="GO:0005576">
    <property type="term" value="C:extracellular region"/>
    <property type="evidence" value="ECO:0007669"/>
    <property type="project" value="UniProtKB-SubCell"/>
</dbReference>
<dbReference type="GO" id="GO:0016020">
    <property type="term" value="C:membrane"/>
    <property type="evidence" value="ECO:0007669"/>
    <property type="project" value="UniProtKB-KW"/>
</dbReference>
<dbReference type="GO" id="GO:0044218">
    <property type="term" value="C:other organism cell membrane"/>
    <property type="evidence" value="ECO:0007669"/>
    <property type="project" value="UniProtKB-KW"/>
</dbReference>
<dbReference type="GO" id="GO:0090729">
    <property type="term" value="F:toxin activity"/>
    <property type="evidence" value="ECO:0007669"/>
    <property type="project" value="UniProtKB-KW"/>
</dbReference>
<dbReference type="GO" id="GO:0031640">
    <property type="term" value="P:killing of cells of another organism"/>
    <property type="evidence" value="ECO:0007669"/>
    <property type="project" value="UniProtKB-KW"/>
</dbReference>
<dbReference type="CDD" id="cd00206">
    <property type="entry name" value="TFP_snake_toxin"/>
    <property type="match status" value="1"/>
</dbReference>
<dbReference type="FunFam" id="2.10.60.10:FF:000024">
    <property type="entry name" value="Cytotoxin 1"/>
    <property type="match status" value="1"/>
</dbReference>
<dbReference type="Gene3D" id="2.10.60.10">
    <property type="entry name" value="CD59"/>
    <property type="match status" value="1"/>
</dbReference>
<dbReference type="InterPro" id="IPR003572">
    <property type="entry name" value="Cytotoxin_Cobra"/>
</dbReference>
<dbReference type="InterPro" id="IPR003571">
    <property type="entry name" value="Snake_3FTx"/>
</dbReference>
<dbReference type="InterPro" id="IPR045860">
    <property type="entry name" value="Snake_toxin-like_sf"/>
</dbReference>
<dbReference type="InterPro" id="IPR018354">
    <property type="entry name" value="Snake_toxin_con_site"/>
</dbReference>
<dbReference type="InterPro" id="IPR054131">
    <property type="entry name" value="Toxin_cobra-type"/>
</dbReference>
<dbReference type="Pfam" id="PF21947">
    <property type="entry name" value="Toxin_cobra-type"/>
    <property type="match status" value="1"/>
</dbReference>
<dbReference type="PRINTS" id="PR00282">
    <property type="entry name" value="CYTOTOXIN"/>
</dbReference>
<dbReference type="SUPFAM" id="SSF57302">
    <property type="entry name" value="Snake toxin-like"/>
    <property type="match status" value="1"/>
</dbReference>
<dbReference type="PROSITE" id="PS00272">
    <property type="entry name" value="SNAKE_TOXIN"/>
    <property type="match status" value="1"/>
</dbReference>
<keyword id="KW-0123">Cardiotoxin</keyword>
<keyword id="KW-0204">Cytolysis</keyword>
<keyword id="KW-0903">Direct protein sequencing</keyword>
<keyword id="KW-1015">Disulfide bond</keyword>
<keyword id="KW-0472">Membrane</keyword>
<keyword id="KW-0964">Secreted</keyword>
<keyword id="KW-1052">Target cell membrane</keyword>
<keyword id="KW-1053">Target membrane</keyword>
<keyword id="KW-0800">Toxin</keyword>
<accession>P01466</accession>
<protein>
    <recommendedName>
        <fullName>Cytotoxin 7</fullName>
    </recommendedName>
    <alternativeName>
        <fullName>Toxin CM-4B</fullName>
    </alternativeName>
</protein>
<sequence length="60" mass="6856">LKCHKLVPPFWKTCPEGKNLCYKMYMVATPMLPVKRGCINVCPKDSALVKYMCCNTNKCN</sequence>
<evidence type="ECO:0000250" key="1">
    <source>
        <dbReference type="UniProtKB" id="P60301"/>
    </source>
</evidence>
<evidence type="ECO:0000250" key="2">
    <source>
        <dbReference type="UniProtKB" id="P60304"/>
    </source>
</evidence>
<evidence type="ECO:0000269" key="3">
    <source>
    </source>
</evidence>
<evidence type="ECO:0000305" key="4"/>
<proteinExistence type="evidence at protein level"/>
<reference key="1">
    <citation type="journal article" date="1977" name="Hoppe-Seyler's Z. Physiol. Chem.">
        <title>Snake venom toxin. The amino acid sequence of three toxins (CM-2h, CM-4b and CM-6) from Naja haje annulifera (Egyptian cobra) venom.</title>
        <authorList>
            <person name="Joubert F.J."/>
        </authorList>
    </citation>
    <scope>PROTEIN SEQUENCE</scope>
    <scope>SUBCELLULAR LOCATION</scope>
    <scope>TOXIC DOSE</scope>
    <source>
        <tissue>Venom</tissue>
    </source>
</reference>
<organism>
    <name type="scientific">Naja annulifera</name>
    <name type="common">Banded Egyptian cobra</name>
    <name type="synonym">Naja haje annulifera</name>
    <dbReference type="NCBI Taxonomy" id="96794"/>
    <lineage>
        <taxon>Eukaryota</taxon>
        <taxon>Metazoa</taxon>
        <taxon>Chordata</taxon>
        <taxon>Craniata</taxon>
        <taxon>Vertebrata</taxon>
        <taxon>Euteleostomi</taxon>
        <taxon>Lepidosauria</taxon>
        <taxon>Squamata</taxon>
        <taxon>Bifurcata</taxon>
        <taxon>Unidentata</taxon>
        <taxon>Episquamata</taxon>
        <taxon>Toxicofera</taxon>
        <taxon>Serpentes</taxon>
        <taxon>Colubroidea</taxon>
        <taxon>Elapidae</taxon>
        <taxon>Elapinae</taxon>
        <taxon>Naja</taxon>
    </lineage>
</organism>